<accession>A7N2S3</accession>
<organism>
    <name type="scientific">Vibrio campbellii (strain ATCC BAA-1116)</name>
    <dbReference type="NCBI Taxonomy" id="2902295"/>
    <lineage>
        <taxon>Bacteria</taxon>
        <taxon>Pseudomonadati</taxon>
        <taxon>Pseudomonadota</taxon>
        <taxon>Gammaproteobacteria</taxon>
        <taxon>Vibrionales</taxon>
        <taxon>Vibrionaceae</taxon>
        <taxon>Vibrio</taxon>
    </lineage>
</organism>
<sequence>MKKSTLINSEVSRLIATLGHTDEITICDAGLPIPDHVQRIDLALAHGIPGFLDTVRVILSESQIEGVIIAEEFATVSPVHHDALITELAQESGLTGKPIAINYVSHEDFKVRTSQSRAVVRTGECTPYANVILQAGVVF</sequence>
<gene>
    <name evidence="1" type="primary">rbsD</name>
    <name type="ordered locus">VIBHAR_06146</name>
</gene>
<feature type="chain" id="PRO_0000346296" description="D-ribose pyranase">
    <location>
        <begin position="1"/>
        <end position="139"/>
    </location>
</feature>
<feature type="active site" description="Proton donor" evidence="1">
    <location>
        <position position="20"/>
    </location>
</feature>
<feature type="binding site" evidence="1">
    <location>
        <position position="28"/>
    </location>
    <ligand>
        <name>substrate</name>
    </ligand>
</feature>
<feature type="binding site" evidence="1">
    <location>
        <position position="106"/>
    </location>
    <ligand>
        <name>substrate</name>
    </ligand>
</feature>
<feature type="binding site" evidence="1">
    <location>
        <begin position="128"/>
        <end position="130"/>
    </location>
    <ligand>
        <name>substrate</name>
    </ligand>
</feature>
<name>RBSD_VIBC1</name>
<comment type="function">
    <text evidence="1">Catalyzes the interconversion of beta-pyran and beta-furan forms of D-ribose.</text>
</comment>
<comment type="catalytic activity">
    <reaction evidence="1">
        <text>beta-D-ribopyranose = beta-D-ribofuranose</text>
        <dbReference type="Rhea" id="RHEA:25432"/>
        <dbReference type="ChEBI" id="CHEBI:27476"/>
        <dbReference type="ChEBI" id="CHEBI:47002"/>
        <dbReference type="EC" id="5.4.99.62"/>
    </reaction>
</comment>
<comment type="pathway">
    <text evidence="1">Carbohydrate metabolism; D-ribose degradation; D-ribose 5-phosphate from beta-D-ribopyranose: step 1/2.</text>
</comment>
<comment type="subunit">
    <text evidence="1">Homodecamer.</text>
</comment>
<comment type="subcellular location">
    <subcellularLocation>
        <location evidence="1">Cytoplasm</location>
    </subcellularLocation>
</comment>
<comment type="similarity">
    <text evidence="1">Belongs to the RbsD / FucU family. RbsD subfamily.</text>
</comment>
<dbReference type="EC" id="5.4.99.62" evidence="1"/>
<dbReference type="EMBL" id="CP000790">
    <property type="protein sequence ID" value="ABU74039.1"/>
    <property type="molecule type" value="Genomic_DNA"/>
</dbReference>
<dbReference type="RefSeq" id="WP_012129640.1">
    <property type="nucleotide sequence ID" value="NC_009784.1"/>
</dbReference>
<dbReference type="SMR" id="A7N2S3"/>
<dbReference type="KEGG" id="vha:VIBHAR_06146"/>
<dbReference type="PATRIC" id="fig|338187.25.peg.4179"/>
<dbReference type="UniPathway" id="UPA00916">
    <property type="reaction ID" value="UER00888"/>
</dbReference>
<dbReference type="Proteomes" id="UP000008152">
    <property type="component" value="Chromosome II"/>
</dbReference>
<dbReference type="GO" id="GO:0005829">
    <property type="term" value="C:cytosol"/>
    <property type="evidence" value="ECO:0007669"/>
    <property type="project" value="TreeGrafter"/>
</dbReference>
<dbReference type="GO" id="GO:0062193">
    <property type="term" value="F:D-ribose pyranase activity"/>
    <property type="evidence" value="ECO:0007669"/>
    <property type="project" value="UniProtKB-EC"/>
</dbReference>
<dbReference type="GO" id="GO:0016872">
    <property type="term" value="F:intramolecular lyase activity"/>
    <property type="evidence" value="ECO:0007669"/>
    <property type="project" value="UniProtKB-UniRule"/>
</dbReference>
<dbReference type="GO" id="GO:0048029">
    <property type="term" value="F:monosaccharide binding"/>
    <property type="evidence" value="ECO:0007669"/>
    <property type="project" value="InterPro"/>
</dbReference>
<dbReference type="GO" id="GO:0019303">
    <property type="term" value="P:D-ribose catabolic process"/>
    <property type="evidence" value="ECO:0007669"/>
    <property type="project" value="UniProtKB-UniRule"/>
</dbReference>
<dbReference type="Gene3D" id="3.40.1650.10">
    <property type="entry name" value="RbsD-like domain"/>
    <property type="match status" value="1"/>
</dbReference>
<dbReference type="HAMAP" id="MF_01661">
    <property type="entry name" value="D_rib_pyranase"/>
    <property type="match status" value="1"/>
</dbReference>
<dbReference type="InterPro" id="IPR023064">
    <property type="entry name" value="D-ribose_pyranase"/>
</dbReference>
<dbReference type="InterPro" id="IPR023750">
    <property type="entry name" value="RbsD-like_sf"/>
</dbReference>
<dbReference type="InterPro" id="IPR007721">
    <property type="entry name" value="RbsD_FucU"/>
</dbReference>
<dbReference type="NCBIfam" id="NF008761">
    <property type="entry name" value="PRK11797.1"/>
    <property type="match status" value="1"/>
</dbReference>
<dbReference type="PANTHER" id="PTHR37831">
    <property type="entry name" value="D-RIBOSE PYRANASE"/>
    <property type="match status" value="1"/>
</dbReference>
<dbReference type="PANTHER" id="PTHR37831:SF1">
    <property type="entry name" value="D-RIBOSE PYRANASE"/>
    <property type="match status" value="1"/>
</dbReference>
<dbReference type="Pfam" id="PF05025">
    <property type="entry name" value="RbsD_FucU"/>
    <property type="match status" value="1"/>
</dbReference>
<dbReference type="SUPFAM" id="SSF102546">
    <property type="entry name" value="RbsD-like"/>
    <property type="match status" value="1"/>
</dbReference>
<proteinExistence type="inferred from homology"/>
<protein>
    <recommendedName>
        <fullName evidence="1">D-ribose pyranase</fullName>
        <ecNumber evidence="1">5.4.99.62</ecNumber>
    </recommendedName>
</protein>
<evidence type="ECO:0000255" key="1">
    <source>
        <dbReference type="HAMAP-Rule" id="MF_01661"/>
    </source>
</evidence>
<reference key="1">
    <citation type="submission" date="2007-08" db="EMBL/GenBank/DDBJ databases">
        <authorList>
            <consortium name="The Vibrio harveyi Genome Sequencing Project"/>
            <person name="Bassler B."/>
            <person name="Clifton S.W."/>
            <person name="Fulton L."/>
            <person name="Delehaunty K."/>
            <person name="Fronick C."/>
            <person name="Harrison M."/>
            <person name="Markivic C."/>
            <person name="Fulton R."/>
            <person name="Tin-Wollam A.-M."/>
            <person name="Shah N."/>
            <person name="Pepin K."/>
            <person name="Nash W."/>
            <person name="Thiruvilangam P."/>
            <person name="Bhonagiri V."/>
            <person name="Waters C."/>
            <person name="Tu K.C."/>
            <person name="Irgon J."/>
            <person name="Wilson R.K."/>
        </authorList>
    </citation>
    <scope>NUCLEOTIDE SEQUENCE [LARGE SCALE GENOMIC DNA]</scope>
    <source>
        <strain>ATCC BAA-1116 / BB120</strain>
    </source>
</reference>
<keyword id="KW-0119">Carbohydrate metabolism</keyword>
<keyword id="KW-0963">Cytoplasm</keyword>
<keyword id="KW-0413">Isomerase</keyword>